<evidence type="ECO:0000255" key="1">
    <source>
        <dbReference type="HAMAP-Rule" id="MF_01537"/>
    </source>
</evidence>
<proteinExistence type="inferred from homology"/>
<protein>
    <recommendedName>
        <fullName evidence="1">Pyrimidine/purine nucleoside phosphorylase</fullName>
        <ecNumber evidence="1">2.4.2.1</ecNumber>
        <ecNumber evidence="1">2.4.2.2</ecNumber>
    </recommendedName>
    <alternativeName>
        <fullName evidence="1">Adenosine phosphorylase</fullName>
    </alternativeName>
    <alternativeName>
        <fullName evidence="1">Cytidine phosphorylase</fullName>
    </alternativeName>
    <alternativeName>
        <fullName evidence="1">Guanosine phosphorylase</fullName>
    </alternativeName>
    <alternativeName>
        <fullName evidence="1">Inosine phosphorylase</fullName>
    </alternativeName>
    <alternativeName>
        <fullName evidence="1">Thymidine phosphorylase</fullName>
    </alternativeName>
    <alternativeName>
        <fullName evidence="1">Uridine phosphorylase</fullName>
    </alternativeName>
    <alternativeName>
        <fullName evidence="1">Xanthosine phosphorylase</fullName>
    </alternativeName>
</protein>
<reference key="1">
    <citation type="journal article" date="2015" name="Genome Announc.">
        <title>Complete genome sequence of Anaeromyxobacter sp. Fw109-5, an anaerobic, metal-reducing bacterium isolated from a contaminated subsurface environment.</title>
        <authorList>
            <person name="Hwang C."/>
            <person name="Copeland A."/>
            <person name="Lucas S."/>
            <person name="Lapidus A."/>
            <person name="Barry K."/>
            <person name="Glavina Del Rio T."/>
            <person name="Dalin E."/>
            <person name="Tice H."/>
            <person name="Pitluck S."/>
            <person name="Sims D."/>
            <person name="Brettin T."/>
            <person name="Bruce D.C."/>
            <person name="Detter J.C."/>
            <person name="Han C.S."/>
            <person name="Schmutz J."/>
            <person name="Larimer F.W."/>
            <person name="Land M.L."/>
            <person name="Hauser L.J."/>
            <person name="Kyrpides N."/>
            <person name="Lykidis A."/>
            <person name="Richardson P."/>
            <person name="Belieav A."/>
            <person name="Sanford R.A."/>
            <person name="Loeffler F.E."/>
            <person name="Fields M.W."/>
        </authorList>
    </citation>
    <scope>NUCLEOTIDE SEQUENCE [LARGE SCALE GENOMIC DNA]</scope>
    <source>
        <strain>Fw109-5</strain>
    </source>
</reference>
<dbReference type="EC" id="2.4.2.1" evidence="1"/>
<dbReference type="EC" id="2.4.2.2" evidence="1"/>
<dbReference type="EMBL" id="CP000769">
    <property type="protein sequence ID" value="ABS27680.1"/>
    <property type="molecule type" value="Genomic_DNA"/>
</dbReference>
<dbReference type="SMR" id="A7HG34"/>
<dbReference type="STRING" id="404589.Anae109_3497"/>
<dbReference type="KEGG" id="afw:Anae109_3497"/>
<dbReference type="eggNOG" id="COG3123">
    <property type="taxonomic scope" value="Bacteria"/>
</dbReference>
<dbReference type="HOGENOM" id="CLU_157874_0_0_7"/>
<dbReference type="Proteomes" id="UP000006382">
    <property type="component" value="Chromosome"/>
</dbReference>
<dbReference type="GO" id="GO:0005829">
    <property type="term" value="C:cytosol"/>
    <property type="evidence" value="ECO:0007669"/>
    <property type="project" value="TreeGrafter"/>
</dbReference>
<dbReference type="GO" id="GO:0047975">
    <property type="term" value="F:guanosine phosphorylase activity"/>
    <property type="evidence" value="ECO:0007669"/>
    <property type="project" value="UniProtKB-EC"/>
</dbReference>
<dbReference type="GO" id="GO:0004731">
    <property type="term" value="F:purine-nucleoside phosphorylase activity"/>
    <property type="evidence" value="ECO:0007669"/>
    <property type="project" value="UniProtKB-UniRule"/>
</dbReference>
<dbReference type="GO" id="GO:0009032">
    <property type="term" value="F:thymidine phosphorylase activity"/>
    <property type="evidence" value="ECO:0007669"/>
    <property type="project" value="UniProtKB-EC"/>
</dbReference>
<dbReference type="GO" id="GO:0004850">
    <property type="term" value="F:uridine phosphorylase activity"/>
    <property type="evidence" value="ECO:0007669"/>
    <property type="project" value="UniProtKB-EC"/>
</dbReference>
<dbReference type="Gene3D" id="2.60.120.10">
    <property type="entry name" value="Jelly Rolls"/>
    <property type="match status" value="1"/>
</dbReference>
<dbReference type="HAMAP" id="MF_01537">
    <property type="entry name" value="Nucleos_phosphorylase_PpnP"/>
    <property type="match status" value="1"/>
</dbReference>
<dbReference type="InterPro" id="IPR009664">
    <property type="entry name" value="Ppnp"/>
</dbReference>
<dbReference type="InterPro" id="IPR014710">
    <property type="entry name" value="RmlC-like_jellyroll"/>
</dbReference>
<dbReference type="InterPro" id="IPR011051">
    <property type="entry name" value="RmlC_Cupin_sf"/>
</dbReference>
<dbReference type="PANTHER" id="PTHR36540">
    <property type="entry name" value="PYRIMIDINE/PURINE NUCLEOSIDE PHOSPHORYLASE"/>
    <property type="match status" value="1"/>
</dbReference>
<dbReference type="PANTHER" id="PTHR36540:SF1">
    <property type="entry name" value="PYRIMIDINE_PURINE NUCLEOSIDE PHOSPHORYLASE"/>
    <property type="match status" value="1"/>
</dbReference>
<dbReference type="Pfam" id="PF06865">
    <property type="entry name" value="Ppnp"/>
    <property type="match status" value="1"/>
</dbReference>
<dbReference type="SUPFAM" id="SSF51182">
    <property type="entry name" value="RmlC-like cupins"/>
    <property type="match status" value="1"/>
</dbReference>
<accession>A7HG34</accession>
<comment type="function">
    <text evidence="1">Catalyzes the phosphorolysis of diverse nucleosides, yielding D-ribose 1-phosphate and the respective free bases. Can use uridine, adenosine, guanosine, cytidine, thymidine, inosine and xanthosine as substrates. Also catalyzes the reverse reactions.</text>
</comment>
<comment type="catalytic activity">
    <reaction evidence="1">
        <text>a purine D-ribonucleoside + phosphate = a purine nucleobase + alpha-D-ribose 1-phosphate</text>
        <dbReference type="Rhea" id="RHEA:19805"/>
        <dbReference type="ChEBI" id="CHEBI:26386"/>
        <dbReference type="ChEBI" id="CHEBI:43474"/>
        <dbReference type="ChEBI" id="CHEBI:57720"/>
        <dbReference type="ChEBI" id="CHEBI:142355"/>
        <dbReference type="EC" id="2.4.2.1"/>
    </reaction>
</comment>
<comment type="catalytic activity">
    <reaction evidence="1">
        <text>adenosine + phosphate = alpha-D-ribose 1-phosphate + adenine</text>
        <dbReference type="Rhea" id="RHEA:27642"/>
        <dbReference type="ChEBI" id="CHEBI:16335"/>
        <dbReference type="ChEBI" id="CHEBI:16708"/>
        <dbReference type="ChEBI" id="CHEBI:43474"/>
        <dbReference type="ChEBI" id="CHEBI:57720"/>
        <dbReference type="EC" id="2.4.2.1"/>
    </reaction>
</comment>
<comment type="catalytic activity">
    <reaction evidence="1">
        <text>cytidine + phosphate = cytosine + alpha-D-ribose 1-phosphate</text>
        <dbReference type="Rhea" id="RHEA:52540"/>
        <dbReference type="ChEBI" id="CHEBI:16040"/>
        <dbReference type="ChEBI" id="CHEBI:17562"/>
        <dbReference type="ChEBI" id="CHEBI:43474"/>
        <dbReference type="ChEBI" id="CHEBI:57720"/>
        <dbReference type="EC" id="2.4.2.2"/>
    </reaction>
</comment>
<comment type="catalytic activity">
    <reaction evidence="1">
        <text>guanosine + phosphate = alpha-D-ribose 1-phosphate + guanine</text>
        <dbReference type="Rhea" id="RHEA:13233"/>
        <dbReference type="ChEBI" id="CHEBI:16235"/>
        <dbReference type="ChEBI" id="CHEBI:16750"/>
        <dbReference type="ChEBI" id="CHEBI:43474"/>
        <dbReference type="ChEBI" id="CHEBI:57720"/>
        <dbReference type="EC" id="2.4.2.1"/>
    </reaction>
</comment>
<comment type="catalytic activity">
    <reaction evidence="1">
        <text>inosine + phosphate = alpha-D-ribose 1-phosphate + hypoxanthine</text>
        <dbReference type="Rhea" id="RHEA:27646"/>
        <dbReference type="ChEBI" id="CHEBI:17368"/>
        <dbReference type="ChEBI" id="CHEBI:17596"/>
        <dbReference type="ChEBI" id="CHEBI:43474"/>
        <dbReference type="ChEBI" id="CHEBI:57720"/>
        <dbReference type="EC" id="2.4.2.1"/>
    </reaction>
</comment>
<comment type="catalytic activity">
    <reaction evidence="1">
        <text>thymidine + phosphate = 2-deoxy-alpha-D-ribose 1-phosphate + thymine</text>
        <dbReference type="Rhea" id="RHEA:16037"/>
        <dbReference type="ChEBI" id="CHEBI:17748"/>
        <dbReference type="ChEBI" id="CHEBI:17821"/>
        <dbReference type="ChEBI" id="CHEBI:43474"/>
        <dbReference type="ChEBI" id="CHEBI:57259"/>
        <dbReference type="EC" id="2.4.2.2"/>
    </reaction>
</comment>
<comment type="catalytic activity">
    <reaction evidence="1">
        <text>uridine + phosphate = alpha-D-ribose 1-phosphate + uracil</text>
        <dbReference type="Rhea" id="RHEA:24388"/>
        <dbReference type="ChEBI" id="CHEBI:16704"/>
        <dbReference type="ChEBI" id="CHEBI:17568"/>
        <dbReference type="ChEBI" id="CHEBI:43474"/>
        <dbReference type="ChEBI" id="CHEBI:57720"/>
        <dbReference type="EC" id="2.4.2.2"/>
    </reaction>
</comment>
<comment type="catalytic activity">
    <reaction evidence="1">
        <text>xanthosine + phosphate = alpha-D-ribose 1-phosphate + xanthine</text>
        <dbReference type="Rhea" id="RHEA:27638"/>
        <dbReference type="ChEBI" id="CHEBI:17712"/>
        <dbReference type="ChEBI" id="CHEBI:18107"/>
        <dbReference type="ChEBI" id="CHEBI:43474"/>
        <dbReference type="ChEBI" id="CHEBI:57720"/>
        <dbReference type="EC" id="2.4.2.1"/>
    </reaction>
</comment>
<comment type="similarity">
    <text evidence="1">Belongs to the nucleoside phosphorylase PpnP family.</text>
</comment>
<name>PPNP_ANADF</name>
<organism>
    <name type="scientific">Anaeromyxobacter sp. (strain Fw109-5)</name>
    <dbReference type="NCBI Taxonomy" id="404589"/>
    <lineage>
        <taxon>Bacteria</taxon>
        <taxon>Pseudomonadati</taxon>
        <taxon>Myxococcota</taxon>
        <taxon>Myxococcia</taxon>
        <taxon>Myxococcales</taxon>
        <taxon>Cystobacterineae</taxon>
        <taxon>Anaeromyxobacteraceae</taxon>
        <taxon>Anaeromyxobacter</taxon>
    </lineage>
</organism>
<sequence length="105" mass="11421">MNDRPRPCSNPAMLKHNTYFEGGVQSVGFERNGRRHTVGVVDAGEFHFATDAAERMTVVSGELWAKLPGEAAFRPFASGTVFEVPAKSGFEVKALAPAAYLCEFL</sequence>
<feature type="chain" id="PRO_0000318555" description="Pyrimidine/purine nucleoside phosphorylase">
    <location>
        <begin position="1"/>
        <end position="105"/>
    </location>
</feature>
<keyword id="KW-0328">Glycosyltransferase</keyword>
<keyword id="KW-1185">Reference proteome</keyword>
<keyword id="KW-0808">Transferase</keyword>
<gene>
    <name evidence="1" type="primary">ppnP</name>
    <name type="ordered locus">Anae109_3497</name>
</gene>